<organism>
    <name type="scientific">Cupriavidus metallidurans (strain ATCC 43123 / DSM 2839 / NBRC 102507 / CH34)</name>
    <name type="common">Ralstonia metallidurans</name>
    <dbReference type="NCBI Taxonomy" id="266264"/>
    <lineage>
        <taxon>Bacteria</taxon>
        <taxon>Pseudomonadati</taxon>
        <taxon>Pseudomonadota</taxon>
        <taxon>Betaproteobacteria</taxon>
        <taxon>Burkholderiales</taxon>
        <taxon>Burkholderiaceae</taxon>
        <taxon>Cupriavidus</taxon>
    </lineage>
</organism>
<dbReference type="EC" id="3.5.1.5" evidence="1"/>
<dbReference type="EMBL" id="CP000352">
    <property type="protein sequence ID" value="ABF07846.1"/>
    <property type="molecule type" value="Genomic_DNA"/>
</dbReference>
<dbReference type="RefSeq" id="WP_011515768.1">
    <property type="nucleotide sequence ID" value="NC_007973.1"/>
</dbReference>
<dbReference type="SMR" id="Q1LPT0"/>
<dbReference type="STRING" id="266264.Rmet_0960"/>
<dbReference type="KEGG" id="rme:Rmet_0960"/>
<dbReference type="eggNOG" id="COG0832">
    <property type="taxonomic scope" value="Bacteria"/>
</dbReference>
<dbReference type="HOGENOM" id="CLU_129707_1_1_4"/>
<dbReference type="UniPathway" id="UPA00258">
    <property type="reaction ID" value="UER00370"/>
</dbReference>
<dbReference type="Proteomes" id="UP000002429">
    <property type="component" value="Chromosome"/>
</dbReference>
<dbReference type="GO" id="GO:0035550">
    <property type="term" value="C:urease complex"/>
    <property type="evidence" value="ECO:0007669"/>
    <property type="project" value="InterPro"/>
</dbReference>
<dbReference type="GO" id="GO:0009039">
    <property type="term" value="F:urease activity"/>
    <property type="evidence" value="ECO:0007669"/>
    <property type="project" value="UniProtKB-UniRule"/>
</dbReference>
<dbReference type="GO" id="GO:0043419">
    <property type="term" value="P:urea catabolic process"/>
    <property type="evidence" value="ECO:0007669"/>
    <property type="project" value="UniProtKB-UniRule"/>
</dbReference>
<dbReference type="CDD" id="cd00407">
    <property type="entry name" value="Urease_beta"/>
    <property type="match status" value="1"/>
</dbReference>
<dbReference type="FunFam" id="2.10.150.10:FF:000001">
    <property type="entry name" value="Urease subunit beta"/>
    <property type="match status" value="1"/>
</dbReference>
<dbReference type="Gene3D" id="2.10.150.10">
    <property type="entry name" value="Urease, beta subunit"/>
    <property type="match status" value="1"/>
</dbReference>
<dbReference type="HAMAP" id="MF_01954">
    <property type="entry name" value="Urease_beta"/>
    <property type="match status" value="1"/>
</dbReference>
<dbReference type="InterPro" id="IPR002019">
    <property type="entry name" value="Urease_beta-like"/>
</dbReference>
<dbReference type="InterPro" id="IPR036461">
    <property type="entry name" value="Urease_betasu_sf"/>
</dbReference>
<dbReference type="InterPro" id="IPR050069">
    <property type="entry name" value="Urease_subunit"/>
</dbReference>
<dbReference type="NCBIfam" id="NF009682">
    <property type="entry name" value="PRK13203.1"/>
    <property type="match status" value="1"/>
</dbReference>
<dbReference type="NCBIfam" id="TIGR00192">
    <property type="entry name" value="urease_beta"/>
    <property type="match status" value="1"/>
</dbReference>
<dbReference type="PANTHER" id="PTHR33569">
    <property type="entry name" value="UREASE"/>
    <property type="match status" value="1"/>
</dbReference>
<dbReference type="PANTHER" id="PTHR33569:SF1">
    <property type="entry name" value="UREASE"/>
    <property type="match status" value="1"/>
</dbReference>
<dbReference type="Pfam" id="PF00699">
    <property type="entry name" value="Urease_beta"/>
    <property type="match status" value="1"/>
</dbReference>
<dbReference type="SUPFAM" id="SSF51278">
    <property type="entry name" value="Urease, beta-subunit"/>
    <property type="match status" value="1"/>
</dbReference>
<name>URE2_CUPMC</name>
<gene>
    <name evidence="1" type="primary">ureB</name>
    <name type="ordered locus">Rmet_0960</name>
</gene>
<accession>Q1LPT0</accession>
<reference key="1">
    <citation type="journal article" date="2010" name="PLoS ONE">
        <title>The complete genome sequence of Cupriavidus metallidurans strain CH34, a master survivalist in harsh and anthropogenic environments.</title>
        <authorList>
            <person name="Janssen P.J."/>
            <person name="Van Houdt R."/>
            <person name="Moors H."/>
            <person name="Monsieurs P."/>
            <person name="Morin N."/>
            <person name="Michaux A."/>
            <person name="Benotmane M.A."/>
            <person name="Leys N."/>
            <person name="Vallaeys T."/>
            <person name="Lapidus A."/>
            <person name="Monchy S."/>
            <person name="Medigue C."/>
            <person name="Taghavi S."/>
            <person name="McCorkle S."/>
            <person name="Dunn J."/>
            <person name="van der Lelie D."/>
            <person name="Mergeay M."/>
        </authorList>
    </citation>
    <scope>NUCLEOTIDE SEQUENCE [LARGE SCALE GENOMIC DNA]</scope>
    <source>
        <strain>ATCC 43123 / DSM 2839 / NBRC 102507 / CH34</strain>
    </source>
</reference>
<evidence type="ECO:0000255" key="1">
    <source>
        <dbReference type="HAMAP-Rule" id="MF_01954"/>
    </source>
</evidence>
<protein>
    <recommendedName>
        <fullName evidence="1">Urease subunit beta</fullName>
        <ecNumber evidence="1">3.5.1.5</ecNumber>
    </recommendedName>
    <alternativeName>
        <fullName evidence="1">Urea amidohydrolase subunit beta</fullName>
    </alternativeName>
</protein>
<keyword id="KW-0963">Cytoplasm</keyword>
<keyword id="KW-0378">Hydrolase</keyword>
<keyword id="KW-1185">Reference proteome</keyword>
<comment type="catalytic activity">
    <reaction evidence="1">
        <text>urea + 2 H2O + H(+) = hydrogencarbonate + 2 NH4(+)</text>
        <dbReference type="Rhea" id="RHEA:20557"/>
        <dbReference type="ChEBI" id="CHEBI:15377"/>
        <dbReference type="ChEBI" id="CHEBI:15378"/>
        <dbReference type="ChEBI" id="CHEBI:16199"/>
        <dbReference type="ChEBI" id="CHEBI:17544"/>
        <dbReference type="ChEBI" id="CHEBI:28938"/>
        <dbReference type="EC" id="3.5.1.5"/>
    </reaction>
</comment>
<comment type="pathway">
    <text evidence="1">Nitrogen metabolism; urea degradation; CO(2) and NH(3) from urea (urease route): step 1/1.</text>
</comment>
<comment type="subunit">
    <text evidence="1">Heterotrimer of UreA (gamma), UreB (beta) and UreC (alpha) subunits. Three heterotrimers associate to form the active enzyme.</text>
</comment>
<comment type="subcellular location">
    <subcellularLocation>
        <location evidence="1">Cytoplasm</location>
    </subcellularLocation>
</comment>
<comment type="similarity">
    <text evidence="1">Belongs to the urease beta subunit family.</text>
</comment>
<proteinExistence type="inferred from homology"/>
<sequence>MIPGELMPLDGEIELNAGRPTVTVTVANTGDRPVQVGSHFHFYETNAALSFDREAARGYRLDIAAGTAVRFEPGQSRTVQLVALDGDRIVYGFNGRIMGAL</sequence>
<feature type="chain" id="PRO_1000070765" description="Urease subunit beta">
    <location>
        <begin position="1"/>
        <end position="101"/>
    </location>
</feature>